<proteinExistence type="inferred from homology"/>
<dbReference type="EMBL" id="CP000438">
    <property type="protein sequence ID" value="ABJ14144.1"/>
    <property type="molecule type" value="Genomic_DNA"/>
</dbReference>
<dbReference type="RefSeq" id="WP_003095212.1">
    <property type="nucleotide sequence ID" value="NZ_CP034244.1"/>
</dbReference>
<dbReference type="SMR" id="Q02FR1"/>
<dbReference type="KEGG" id="pau:PA14_62970"/>
<dbReference type="PseudoCAP" id="PA14_62970"/>
<dbReference type="HOGENOM" id="CLU_005965_2_1_6"/>
<dbReference type="BioCyc" id="PAER208963:G1G74-5326-MONOMER"/>
<dbReference type="Proteomes" id="UP000000653">
    <property type="component" value="Chromosome"/>
</dbReference>
<dbReference type="GO" id="GO:0005524">
    <property type="term" value="F:ATP binding"/>
    <property type="evidence" value="ECO:0007669"/>
    <property type="project" value="UniProtKB-UniRule"/>
</dbReference>
<dbReference type="GO" id="GO:0140662">
    <property type="term" value="F:ATP-dependent protein folding chaperone"/>
    <property type="evidence" value="ECO:0007669"/>
    <property type="project" value="InterPro"/>
</dbReference>
<dbReference type="GO" id="GO:0051082">
    <property type="term" value="F:unfolded protein binding"/>
    <property type="evidence" value="ECO:0007669"/>
    <property type="project" value="InterPro"/>
</dbReference>
<dbReference type="CDD" id="cd10234">
    <property type="entry name" value="ASKHA_NBD_HSP70_DnaK-like"/>
    <property type="match status" value="1"/>
</dbReference>
<dbReference type="FunFam" id="2.60.34.10:FF:000014">
    <property type="entry name" value="Chaperone protein DnaK HSP70"/>
    <property type="match status" value="1"/>
</dbReference>
<dbReference type="FunFam" id="3.30.30.30:FF:000003">
    <property type="entry name" value="Heat shock protein 9"/>
    <property type="match status" value="1"/>
</dbReference>
<dbReference type="FunFam" id="1.20.1270.10:FF:000001">
    <property type="entry name" value="Molecular chaperone DnaK"/>
    <property type="match status" value="1"/>
</dbReference>
<dbReference type="FunFam" id="3.30.420.40:FF:000004">
    <property type="entry name" value="Molecular chaperone DnaK"/>
    <property type="match status" value="1"/>
</dbReference>
<dbReference type="FunFam" id="3.90.640.10:FF:000003">
    <property type="entry name" value="Molecular chaperone DnaK"/>
    <property type="match status" value="1"/>
</dbReference>
<dbReference type="Gene3D" id="1.20.1270.10">
    <property type="match status" value="1"/>
</dbReference>
<dbReference type="Gene3D" id="3.30.420.40">
    <property type="match status" value="2"/>
</dbReference>
<dbReference type="Gene3D" id="3.90.640.10">
    <property type="entry name" value="Actin, Chain A, domain 4"/>
    <property type="match status" value="1"/>
</dbReference>
<dbReference type="Gene3D" id="2.60.34.10">
    <property type="entry name" value="Substrate Binding Domain Of DNAk, Chain A, domain 1"/>
    <property type="match status" value="1"/>
</dbReference>
<dbReference type="HAMAP" id="MF_00332">
    <property type="entry name" value="DnaK"/>
    <property type="match status" value="1"/>
</dbReference>
<dbReference type="InterPro" id="IPR043129">
    <property type="entry name" value="ATPase_NBD"/>
</dbReference>
<dbReference type="InterPro" id="IPR012725">
    <property type="entry name" value="Chaperone_DnaK"/>
</dbReference>
<dbReference type="InterPro" id="IPR018181">
    <property type="entry name" value="Heat_shock_70_CS"/>
</dbReference>
<dbReference type="InterPro" id="IPR029048">
    <property type="entry name" value="HSP70_C_sf"/>
</dbReference>
<dbReference type="InterPro" id="IPR029047">
    <property type="entry name" value="HSP70_peptide-bd_sf"/>
</dbReference>
<dbReference type="InterPro" id="IPR013126">
    <property type="entry name" value="Hsp_70_fam"/>
</dbReference>
<dbReference type="NCBIfam" id="NF001413">
    <property type="entry name" value="PRK00290.1"/>
    <property type="match status" value="1"/>
</dbReference>
<dbReference type="NCBIfam" id="NF003520">
    <property type="entry name" value="PRK05183.1"/>
    <property type="match status" value="1"/>
</dbReference>
<dbReference type="NCBIfam" id="TIGR02350">
    <property type="entry name" value="prok_dnaK"/>
    <property type="match status" value="1"/>
</dbReference>
<dbReference type="PANTHER" id="PTHR19375">
    <property type="entry name" value="HEAT SHOCK PROTEIN 70KDA"/>
    <property type="match status" value="1"/>
</dbReference>
<dbReference type="Pfam" id="PF00012">
    <property type="entry name" value="HSP70"/>
    <property type="match status" value="1"/>
</dbReference>
<dbReference type="PRINTS" id="PR00301">
    <property type="entry name" value="HEATSHOCK70"/>
</dbReference>
<dbReference type="SUPFAM" id="SSF53067">
    <property type="entry name" value="Actin-like ATPase domain"/>
    <property type="match status" value="2"/>
</dbReference>
<dbReference type="SUPFAM" id="SSF100934">
    <property type="entry name" value="Heat shock protein 70kD (HSP70), C-terminal subdomain"/>
    <property type="match status" value="1"/>
</dbReference>
<dbReference type="SUPFAM" id="SSF100920">
    <property type="entry name" value="Heat shock protein 70kD (HSP70), peptide-binding domain"/>
    <property type="match status" value="1"/>
</dbReference>
<dbReference type="PROSITE" id="PS00297">
    <property type="entry name" value="HSP70_1"/>
    <property type="match status" value="1"/>
</dbReference>
<dbReference type="PROSITE" id="PS00329">
    <property type="entry name" value="HSP70_2"/>
    <property type="match status" value="1"/>
</dbReference>
<dbReference type="PROSITE" id="PS01036">
    <property type="entry name" value="HSP70_3"/>
    <property type="match status" value="1"/>
</dbReference>
<organism>
    <name type="scientific">Pseudomonas aeruginosa (strain UCBPP-PA14)</name>
    <dbReference type="NCBI Taxonomy" id="208963"/>
    <lineage>
        <taxon>Bacteria</taxon>
        <taxon>Pseudomonadati</taxon>
        <taxon>Pseudomonadota</taxon>
        <taxon>Gammaproteobacteria</taxon>
        <taxon>Pseudomonadales</taxon>
        <taxon>Pseudomonadaceae</taxon>
        <taxon>Pseudomonas</taxon>
    </lineage>
</organism>
<sequence>MGKIIGIDLGTTNSCVAILENGNVKVIENAEGARTTPSIIAYTNDGETLVGQPAKRQAVTNPQNTLYAVKRLIGRRFEENVVQKDIQMVPYSIVKADNGDAWVEVKGQKMAPPQISAEVLKKMKKTAEDYLGEPVTEAVITVPAYFNDSQRQATKDAGRIAGLDVKRIINEPTAAALAYGLDKAKGDHTVIVYDLGGGTFDVSVIEIAEVDGEHQFEVLATNGDTFLGGEDFDIRLIDYLVDEFKKESGINLKGDPLAMQRLKEAAEKAKIELSSTQQTDVNLPYVTADASGPKHLNVKVSRAKLESLVEDLVQRTIEPCRTALKDAGLDVSDIHEVILVGGQTRMPLVQKTVAEFFGKEARKDVNPDEAVAVGAAIQGAVLAGDVKDVLLLDVTPLTLGIETLGGVMTGLIEKNTTIPTKKSQVFSTADDNQGAVTIHVLQGERKQAAQNKSLGKFDLADIPPAPRGVPQIEVTFDIDANGILHVSAKDKATGKQQSIVIKASSGLSEDEIQQMVRDAEANAEEDRKFEELAAARNQGDALVHATRKMITEAGDKATAEDKATIEKALGELEAAVKGDDKAEIEAKMNALSQASTPLAQKMYAEQAQQGEDAPQGEQAKAADDVVDAEFEEVKDNK</sequence>
<name>DNAK_PSEAB</name>
<reference key="1">
    <citation type="journal article" date="2006" name="Genome Biol.">
        <title>Genomic analysis reveals that Pseudomonas aeruginosa virulence is combinatorial.</title>
        <authorList>
            <person name="Lee D.G."/>
            <person name="Urbach J.M."/>
            <person name="Wu G."/>
            <person name="Liberati N.T."/>
            <person name="Feinbaum R.L."/>
            <person name="Miyata S."/>
            <person name="Diggins L.T."/>
            <person name="He J."/>
            <person name="Saucier M."/>
            <person name="Deziel E."/>
            <person name="Friedman L."/>
            <person name="Li L."/>
            <person name="Grills G."/>
            <person name="Montgomery K."/>
            <person name="Kucherlapati R."/>
            <person name="Rahme L.G."/>
            <person name="Ausubel F.M."/>
        </authorList>
    </citation>
    <scope>NUCLEOTIDE SEQUENCE [LARGE SCALE GENOMIC DNA]</scope>
    <source>
        <strain>UCBPP-PA14</strain>
    </source>
</reference>
<accession>Q02FR1</accession>
<gene>
    <name evidence="1" type="primary">dnaK</name>
    <name type="ordered locus">PA14_62970</name>
</gene>
<feature type="chain" id="PRO_1000059632" description="Chaperone protein DnaK">
    <location>
        <begin position="1"/>
        <end position="637"/>
    </location>
</feature>
<feature type="region of interest" description="Disordered" evidence="2">
    <location>
        <begin position="603"/>
        <end position="637"/>
    </location>
</feature>
<feature type="modified residue" description="Phosphothreonine; by autocatalysis" evidence="1">
    <location>
        <position position="199"/>
    </location>
</feature>
<protein>
    <recommendedName>
        <fullName evidence="1">Chaperone protein DnaK</fullName>
    </recommendedName>
    <alternativeName>
        <fullName evidence="1">HSP70</fullName>
    </alternativeName>
    <alternativeName>
        <fullName evidence="1">Heat shock 70 kDa protein</fullName>
    </alternativeName>
    <alternativeName>
        <fullName evidence="1">Heat shock protein 70</fullName>
    </alternativeName>
</protein>
<keyword id="KW-0067">ATP-binding</keyword>
<keyword id="KW-0143">Chaperone</keyword>
<keyword id="KW-0547">Nucleotide-binding</keyword>
<keyword id="KW-0597">Phosphoprotein</keyword>
<keyword id="KW-0346">Stress response</keyword>
<evidence type="ECO:0000255" key="1">
    <source>
        <dbReference type="HAMAP-Rule" id="MF_00332"/>
    </source>
</evidence>
<evidence type="ECO:0000256" key="2">
    <source>
        <dbReference type="SAM" id="MobiDB-lite"/>
    </source>
</evidence>
<comment type="function">
    <text evidence="1">Acts as a chaperone.</text>
</comment>
<comment type="induction">
    <text evidence="1">By stress conditions e.g. heat shock.</text>
</comment>
<comment type="similarity">
    <text evidence="1">Belongs to the heat shock protein 70 family.</text>
</comment>